<dbReference type="EMBL" id="BA000004">
    <property type="protein sequence ID" value="BAB06768.1"/>
    <property type="molecule type" value="Genomic_DNA"/>
</dbReference>
<dbReference type="PIR" id="A84031">
    <property type="entry name" value="A84031"/>
</dbReference>
<dbReference type="RefSeq" id="WP_010899193.1">
    <property type="nucleotide sequence ID" value="NC_002570.2"/>
</dbReference>
<dbReference type="SMR" id="Q9K8F7"/>
<dbReference type="STRING" id="272558.gene:10728959"/>
<dbReference type="KEGG" id="bha:BH3049"/>
<dbReference type="eggNOG" id="COG0218">
    <property type="taxonomic scope" value="Bacteria"/>
</dbReference>
<dbReference type="HOGENOM" id="CLU_033732_3_0_9"/>
<dbReference type="OrthoDB" id="9804921at2"/>
<dbReference type="Proteomes" id="UP000001258">
    <property type="component" value="Chromosome"/>
</dbReference>
<dbReference type="GO" id="GO:0005829">
    <property type="term" value="C:cytosol"/>
    <property type="evidence" value="ECO:0007669"/>
    <property type="project" value="TreeGrafter"/>
</dbReference>
<dbReference type="GO" id="GO:0005525">
    <property type="term" value="F:GTP binding"/>
    <property type="evidence" value="ECO:0007669"/>
    <property type="project" value="UniProtKB-UniRule"/>
</dbReference>
<dbReference type="GO" id="GO:0046872">
    <property type="term" value="F:metal ion binding"/>
    <property type="evidence" value="ECO:0007669"/>
    <property type="project" value="UniProtKB-KW"/>
</dbReference>
<dbReference type="GO" id="GO:0000917">
    <property type="term" value="P:division septum assembly"/>
    <property type="evidence" value="ECO:0007669"/>
    <property type="project" value="UniProtKB-KW"/>
</dbReference>
<dbReference type="CDD" id="cd01876">
    <property type="entry name" value="YihA_EngB"/>
    <property type="match status" value="1"/>
</dbReference>
<dbReference type="FunFam" id="3.40.50.300:FF:000098">
    <property type="entry name" value="Probable GTP-binding protein EngB"/>
    <property type="match status" value="1"/>
</dbReference>
<dbReference type="Gene3D" id="3.40.50.300">
    <property type="entry name" value="P-loop containing nucleotide triphosphate hydrolases"/>
    <property type="match status" value="1"/>
</dbReference>
<dbReference type="HAMAP" id="MF_00321">
    <property type="entry name" value="GTPase_EngB"/>
    <property type="match status" value="1"/>
</dbReference>
<dbReference type="InterPro" id="IPR030393">
    <property type="entry name" value="G_ENGB_dom"/>
</dbReference>
<dbReference type="InterPro" id="IPR006073">
    <property type="entry name" value="GTP-bd"/>
</dbReference>
<dbReference type="InterPro" id="IPR019987">
    <property type="entry name" value="GTP-bd_ribosome_bio_YsxC"/>
</dbReference>
<dbReference type="InterPro" id="IPR027417">
    <property type="entry name" value="P-loop_NTPase"/>
</dbReference>
<dbReference type="NCBIfam" id="TIGR03598">
    <property type="entry name" value="GTPase_YsxC"/>
    <property type="match status" value="1"/>
</dbReference>
<dbReference type="PANTHER" id="PTHR11649:SF13">
    <property type="entry name" value="ENGB-TYPE G DOMAIN-CONTAINING PROTEIN"/>
    <property type="match status" value="1"/>
</dbReference>
<dbReference type="PANTHER" id="PTHR11649">
    <property type="entry name" value="MSS1/TRME-RELATED GTP-BINDING PROTEIN"/>
    <property type="match status" value="1"/>
</dbReference>
<dbReference type="Pfam" id="PF01926">
    <property type="entry name" value="MMR_HSR1"/>
    <property type="match status" value="1"/>
</dbReference>
<dbReference type="SUPFAM" id="SSF52540">
    <property type="entry name" value="P-loop containing nucleoside triphosphate hydrolases"/>
    <property type="match status" value="1"/>
</dbReference>
<dbReference type="PROSITE" id="PS51706">
    <property type="entry name" value="G_ENGB"/>
    <property type="match status" value="1"/>
</dbReference>
<proteinExistence type="inferred from homology"/>
<organism>
    <name type="scientific">Halalkalibacterium halodurans (strain ATCC BAA-125 / DSM 18197 / FERM 7344 / JCM 9153 / C-125)</name>
    <name type="common">Bacillus halodurans</name>
    <dbReference type="NCBI Taxonomy" id="272558"/>
    <lineage>
        <taxon>Bacteria</taxon>
        <taxon>Bacillati</taxon>
        <taxon>Bacillota</taxon>
        <taxon>Bacilli</taxon>
        <taxon>Bacillales</taxon>
        <taxon>Bacillaceae</taxon>
        <taxon>Halalkalibacterium (ex Joshi et al. 2022)</taxon>
    </lineage>
</organism>
<protein>
    <recommendedName>
        <fullName evidence="1">Probable GTP-binding protein EngB</fullName>
    </recommendedName>
</protein>
<keyword id="KW-0131">Cell cycle</keyword>
<keyword id="KW-0132">Cell division</keyword>
<keyword id="KW-0342">GTP-binding</keyword>
<keyword id="KW-0460">Magnesium</keyword>
<keyword id="KW-0479">Metal-binding</keyword>
<keyword id="KW-0547">Nucleotide-binding</keyword>
<keyword id="KW-1185">Reference proteome</keyword>
<keyword id="KW-0717">Septation</keyword>
<name>ENGB_HALH5</name>
<accession>Q9K8F7</accession>
<feature type="chain" id="PRO_0000157735" description="Probable GTP-binding protein EngB">
    <location>
        <begin position="1"/>
        <end position="194"/>
    </location>
</feature>
<feature type="domain" description="EngB-type G" evidence="1">
    <location>
        <begin position="22"/>
        <end position="194"/>
    </location>
</feature>
<feature type="binding site" evidence="1">
    <location>
        <begin position="30"/>
        <end position="37"/>
    </location>
    <ligand>
        <name>GTP</name>
        <dbReference type="ChEBI" id="CHEBI:37565"/>
    </ligand>
</feature>
<feature type="binding site" evidence="1">
    <location>
        <position position="37"/>
    </location>
    <ligand>
        <name>Mg(2+)</name>
        <dbReference type="ChEBI" id="CHEBI:18420"/>
    </ligand>
</feature>
<feature type="binding site" evidence="1">
    <location>
        <begin position="57"/>
        <end position="61"/>
    </location>
    <ligand>
        <name>GTP</name>
        <dbReference type="ChEBI" id="CHEBI:37565"/>
    </ligand>
</feature>
<feature type="binding site" evidence="1">
    <location>
        <position position="59"/>
    </location>
    <ligand>
        <name>Mg(2+)</name>
        <dbReference type="ChEBI" id="CHEBI:18420"/>
    </ligand>
</feature>
<feature type="binding site" evidence="1">
    <location>
        <begin position="75"/>
        <end position="78"/>
    </location>
    <ligand>
        <name>GTP</name>
        <dbReference type="ChEBI" id="CHEBI:37565"/>
    </ligand>
</feature>
<feature type="binding site" evidence="1">
    <location>
        <begin position="142"/>
        <end position="145"/>
    </location>
    <ligand>
        <name>GTP</name>
        <dbReference type="ChEBI" id="CHEBI:37565"/>
    </ligand>
</feature>
<feature type="binding site" evidence="1">
    <location>
        <begin position="174"/>
        <end position="176"/>
    </location>
    <ligand>
        <name>GTP</name>
        <dbReference type="ChEBI" id="CHEBI:37565"/>
    </ligand>
</feature>
<reference key="1">
    <citation type="journal article" date="2000" name="Nucleic Acids Res.">
        <title>Complete genome sequence of the alkaliphilic bacterium Bacillus halodurans and genomic sequence comparison with Bacillus subtilis.</title>
        <authorList>
            <person name="Takami H."/>
            <person name="Nakasone K."/>
            <person name="Takaki Y."/>
            <person name="Maeno G."/>
            <person name="Sasaki R."/>
            <person name="Masui N."/>
            <person name="Fuji F."/>
            <person name="Hirama C."/>
            <person name="Nakamura Y."/>
            <person name="Ogasawara N."/>
            <person name="Kuhara S."/>
            <person name="Horikoshi K."/>
        </authorList>
    </citation>
    <scope>NUCLEOTIDE SEQUENCE [LARGE SCALE GENOMIC DNA]</scope>
    <source>
        <strain>ATCC BAA-125 / DSM 18197 / FERM 7344 / JCM 9153 / C-125</strain>
    </source>
</reference>
<sequence>MKVTKAELDCVAVKPEQYPNSPLPEVALAGRSNVGKSSFINKMINRKKLARTSQRPGKTQTLNFYNINDILHFVDVPGYGFAKVSKKDREAWGRMIETYLQQRGQLKAVLQIIDIRHDPTKDDQLMYDWLKHFEIPVIIIATKCDKIPKGKWPKHVKNIASVLEKDGGDPIVIFSSETGVGKDEAWKAILHAIS</sequence>
<comment type="function">
    <text evidence="1">Necessary for normal cell division and for the maintenance of normal septation.</text>
</comment>
<comment type="cofactor">
    <cofactor evidence="1">
        <name>Mg(2+)</name>
        <dbReference type="ChEBI" id="CHEBI:18420"/>
    </cofactor>
</comment>
<comment type="similarity">
    <text evidence="1">Belongs to the TRAFAC class TrmE-Era-EngA-EngB-Septin-like GTPase superfamily. EngB GTPase family.</text>
</comment>
<evidence type="ECO:0000255" key="1">
    <source>
        <dbReference type="HAMAP-Rule" id="MF_00321"/>
    </source>
</evidence>
<gene>
    <name evidence="1" type="primary">engB</name>
    <name type="ordered locus">BH3049</name>
</gene>